<name>RAVA_PHOLL</name>
<reference key="1">
    <citation type="journal article" date="2003" name="Nat. Biotechnol.">
        <title>The genome sequence of the entomopathogenic bacterium Photorhabdus luminescens.</title>
        <authorList>
            <person name="Duchaud E."/>
            <person name="Rusniok C."/>
            <person name="Frangeul L."/>
            <person name="Buchrieser C."/>
            <person name="Givaudan A."/>
            <person name="Taourit S."/>
            <person name="Bocs S."/>
            <person name="Boursaux-Eude C."/>
            <person name="Chandler M."/>
            <person name="Charles J.-F."/>
            <person name="Dassa E."/>
            <person name="Derose R."/>
            <person name="Derzelle S."/>
            <person name="Freyssinet G."/>
            <person name="Gaudriault S."/>
            <person name="Medigue C."/>
            <person name="Lanois A."/>
            <person name="Powell K."/>
            <person name="Siguier P."/>
            <person name="Vincent R."/>
            <person name="Wingate V."/>
            <person name="Zouine M."/>
            <person name="Glaser P."/>
            <person name="Boemare N."/>
            <person name="Danchin A."/>
            <person name="Kunst F."/>
        </authorList>
    </citation>
    <scope>NUCLEOTIDE SEQUENCE [LARGE SCALE GENOMIC DNA]</scope>
    <source>
        <strain>DSM 15139 / CIP 105565 / TT01</strain>
    </source>
</reference>
<dbReference type="EC" id="3.6.1.-" evidence="1"/>
<dbReference type="EMBL" id="BX571859">
    <property type="protein sequence ID" value="CAE12349.1"/>
    <property type="molecule type" value="Genomic_DNA"/>
</dbReference>
<dbReference type="SMR" id="Q7NA81"/>
<dbReference type="STRING" id="243265.plu0054"/>
<dbReference type="KEGG" id="plu:plu0054"/>
<dbReference type="eggNOG" id="COG0714">
    <property type="taxonomic scope" value="Bacteria"/>
</dbReference>
<dbReference type="HOGENOM" id="CLU_018678_1_0_6"/>
<dbReference type="OrthoDB" id="1814213at2"/>
<dbReference type="Proteomes" id="UP000002514">
    <property type="component" value="Chromosome"/>
</dbReference>
<dbReference type="GO" id="GO:0005737">
    <property type="term" value="C:cytoplasm"/>
    <property type="evidence" value="ECO:0007669"/>
    <property type="project" value="UniProtKB-SubCell"/>
</dbReference>
<dbReference type="GO" id="GO:0005524">
    <property type="term" value="F:ATP binding"/>
    <property type="evidence" value="ECO:0007669"/>
    <property type="project" value="UniProtKB-KW"/>
</dbReference>
<dbReference type="GO" id="GO:0016887">
    <property type="term" value="F:ATP hydrolysis activity"/>
    <property type="evidence" value="ECO:0007669"/>
    <property type="project" value="UniProtKB-UniRule"/>
</dbReference>
<dbReference type="CDD" id="cd00009">
    <property type="entry name" value="AAA"/>
    <property type="match status" value="1"/>
</dbReference>
<dbReference type="Gene3D" id="1.20.58.1510">
    <property type="match status" value="1"/>
</dbReference>
<dbReference type="Gene3D" id="2.40.128.430">
    <property type="match status" value="1"/>
</dbReference>
<dbReference type="Gene3D" id="3.40.50.300">
    <property type="entry name" value="P-loop containing nucleotide triphosphate hydrolases"/>
    <property type="match status" value="1"/>
</dbReference>
<dbReference type="HAMAP" id="MF_01625">
    <property type="entry name" value="ATPase_RavA"/>
    <property type="match status" value="1"/>
</dbReference>
<dbReference type="InterPro" id="IPR003593">
    <property type="entry name" value="AAA+_ATPase"/>
</dbReference>
<dbReference type="InterPro" id="IPR023671">
    <property type="entry name" value="ATPase_RavA"/>
</dbReference>
<dbReference type="InterPro" id="IPR022547">
    <property type="entry name" value="ATPase_RavA_C"/>
</dbReference>
<dbReference type="InterPro" id="IPR045427">
    <property type="entry name" value="MoxR"/>
</dbReference>
<dbReference type="InterPro" id="IPR027417">
    <property type="entry name" value="P-loop_NTPase"/>
</dbReference>
<dbReference type="InterPro" id="IPR041538">
    <property type="entry name" value="RavA-like_AAA_lid"/>
</dbReference>
<dbReference type="InterPro" id="IPR050513">
    <property type="entry name" value="RavA_ATPases"/>
</dbReference>
<dbReference type="InterPro" id="IPR046898">
    <property type="entry name" value="RavA_LARA_dom"/>
</dbReference>
<dbReference type="InterPro" id="IPR046932">
    <property type="entry name" value="RavA_LARA_sf"/>
</dbReference>
<dbReference type="NCBIfam" id="NF010054">
    <property type="entry name" value="PRK13531.1"/>
    <property type="match status" value="1"/>
</dbReference>
<dbReference type="PANTHER" id="PTHR32204">
    <property type="entry name" value="ATPASE RAVA"/>
    <property type="match status" value="1"/>
</dbReference>
<dbReference type="PANTHER" id="PTHR32204:SF0">
    <property type="entry name" value="ATPASE RAVA"/>
    <property type="match status" value="1"/>
</dbReference>
<dbReference type="Pfam" id="PF17868">
    <property type="entry name" value="AAA_lid_8"/>
    <property type="match status" value="1"/>
</dbReference>
<dbReference type="Pfam" id="PF12592">
    <property type="entry name" value="ATPase_RavA_C"/>
    <property type="match status" value="1"/>
</dbReference>
<dbReference type="Pfam" id="PF20030">
    <property type="entry name" value="bpMoxR"/>
    <property type="match status" value="1"/>
</dbReference>
<dbReference type="Pfam" id="PF20265">
    <property type="entry name" value="LARA_dom"/>
    <property type="match status" value="1"/>
</dbReference>
<dbReference type="SMART" id="SM00382">
    <property type="entry name" value="AAA"/>
    <property type="match status" value="1"/>
</dbReference>
<dbReference type="SUPFAM" id="SSF52540">
    <property type="entry name" value="P-loop containing nucleoside triphosphate hydrolases"/>
    <property type="match status" value="1"/>
</dbReference>
<protein>
    <recommendedName>
        <fullName evidence="1">Regulatory ATPase RavA</fullName>
        <ecNumber evidence="1">3.6.1.-</ecNumber>
    </recommendedName>
    <alternativeName>
        <fullName evidence="1">Regulatory ATPase variant A</fullName>
    </alternativeName>
</protein>
<organism>
    <name type="scientific">Photorhabdus laumondii subsp. laumondii (strain DSM 15139 / CIP 105565 / TT01)</name>
    <name type="common">Photorhabdus luminescens subsp. laumondii</name>
    <dbReference type="NCBI Taxonomy" id="243265"/>
    <lineage>
        <taxon>Bacteria</taxon>
        <taxon>Pseudomonadati</taxon>
        <taxon>Pseudomonadota</taxon>
        <taxon>Gammaproteobacteria</taxon>
        <taxon>Enterobacterales</taxon>
        <taxon>Morganellaceae</taxon>
        <taxon>Photorhabdus</taxon>
    </lineage>
</organism>
<proteinExistence type="inferred from homology"/>
<comment type="function">
    <text evidence="1">Component of the RavA-ViaA chaperone complex, which may act on the membrane to optimize the function of some of the respiratory chains. RavA functions as an ATPase.</text>
</comment>
<comment type="catalytic activity">
    <reaction evidence="1">
        <text>ATP + H2O = ADP + phosphate + H(+)</text>
        <dbReference type="Rhea" id="RHEA:13065"/>
        <dbReference type="ChEBI" id="CHEBI:15377"/>
        <dbReference type="ChEBI" id="CHEBI:15378"/>
        <dbReference type="ChEBI" id="CHEBI:30616"/>
        <dbReference type="ChEBI" id="CHEBI:43474"/>
        <dbReference type="ChEBI" id="CHEBI:456216"/>
    </reaction>
</comment>
<comment type="activity regulation">
    <text evidence="1">ATPase activity is stimulated by ViaA.</text>
</comment>
<comment type="subunit">
    <text evidence="1">Homohexamer. Interacts with ViaA.</text>
</comment>
<comment type="subcellular location">
    <subcellularLocation>
        <location evidence="1">Cytoplasm</location>
    </subcellularLocation>
</comment>
<comment type="similarity">
    <text evidence="1">Belongs to the RavA family.</text>
</comment>
<feature type="chain" id="PRO_0000209373" description="Regulatory ATPase RavA">
    <location>
        <begin position="1"/>
        <end position="503"/>
    </location>
</feature>
<feature type="binding site" evidence="1">
    <location>
        <position position="23"/>
    </location>
    <ligand>
        <name>ADP</name>
        <dbReference type="ChEBI" id="CHEBI:456216"/>
    </ligand>
</feature>
<feature type="binding site" evidence="1">
    <location>
        <position position="49"/>
    </location>
    <ligand>
        <name>ADP</name>
        <dbReference type="ChEBI" id="CHEBI:456216"/>
    </ligand>
</feature>
<feature type="binding site" evidence="1">
    <location>
        <position position="50"/>
    </location>
    <ligand>
        <name>ADP</name>
        <dbReference type="ChEBI" id="CHEBI:456216"/>
    </ligand>
</feature>
<feature type="binding site" evidence="1">
    <location>
        <position position="51"/>
    </location>
    <ligand>
        <name>ADP</name>
        <dbReference type="ChEBI" id="CHEBI:456216"/>
    </ligand>
</feature>
<feature type="binding site" evidence="1">
    <location>
        <position position="52"/>
    </location>
    <ligand>
        <name>ADP</name>
        <dbReference type="ChEBI" id="CHEBI:456216"/>
    </ligand>
</feature>
<feature type="binding site" evidence="1">
    <location>
        <position position="53"/>
    </location>
    <ligand>
        <name>ADP</name>
        <dbReference type="ChEBI" id="CHEBI:456216"/>
    </ligand>
</feature>
<feature type="binding site" evidence="1">
    <location>
        <position position="54"/>
    </location>
    <ligand>
        <name>ADP</name>
        <dbReference type="ChEBI" id="CHEBI:456216"/>
    </ligand>
</feature>
<feature type="binding site" evidence="1">
    <location>
        <position position="196"/>
    </location>
    <ligand>
        <name>ADP</name>
        <dbReference type="ChEBI" id="CHEBI:456216"/>
    </ligand>
</feature>
<accession>Q7NA81</accession>
<sequence length="503" mass="59052">MVRIMLLAEKIVCLSHYLESGLYERQQTIRLCLLAALCGESVFLLGPPGIAKSLIARRLKFAFRDARAFEYLMTRFSTPEEIFGPLSIQALKEEGRYQRLTNGYLPETEIVFLDEIWKAGPAILNTLLTAINERKFRNGDTEDKIPMRLLITASNELPEADNSLEALYDRMLIRIWLDKIQEKKNFRALLSSHKNENDNPVPANIQITSEEFHQWQKEIDKIVLPDSCFDIIYHLRQQLDATEHSPYVSDRRWKKAIHLLQASAFFNGRKEISPLDLILLKDCLWHDLHSFKLLPQYLNTLMTEQAYRQRILSQQIDSLYHQWTQACQDKNDQQALKLEKQTRLFGRKIQYSLPDHINEEKLILFLHTPLHLHDIKVNFIELEKKALNIWINKGRELSARLNGIGFPQNIAAEVNSAHQPEIFDISRRSSTLYLPDHQHQQNEENNEWQERLEKFNQEIHHQHQLFNQHQPCLFIESHWLATIEQSFIQLSDKIKQLKIKIGS</sequence>
<keyword id="KW-0067">ATP-binding</keyword>
<keyword id="KW-0143">Chaperone</keyword>
<keyword id="KW-0963">Cytoplasm</keyword>
<keyword id="KW-0378">Hydrolase</keyword>
<keyword id="KW-0547">Nucleotide-binding</keyword>
<keyword id="KW-1185">Reference proteome</keyword>
<evidence type="ECO:0000255" key="1">
    <source>
        <dbReference type="HAMAP-Rule" id="MF_01625"/>
    </source>
</evidence>
<gene>
    <name evidence="1" type="primary">ravA</name>
    <name type="ordered locus">plu0054</name>
</gene>